<name>LIPA_CHLAA</name>
<proteinExistence type="inferred from homology"/>
<evidence type="ECO:0000255" key="1">
    <source>
        <dbReference type="HAMAP-Rule" id="MF_00206"/>
    </source>
</evidence>
<evidence type="ECO:0000255" key="2">
    <source>
        <dbReference type="PROSITE-ProRule" id="PRU01266"/>
    </source>
</evidence>
<organism>
    <name type="scientific">Chloroflexus aurantiacus (strain ATCC 29366 / DSM 635 / J-10-fl)</name>
    <dbReference type="NCBI Taxonomy" id="324602"/>
    <lineage>
        <taxon>Bacteria</taxon>
        <taxon>Bacillati</taxon>
        <taxon>Chloroflexota</taxon>
        <taxon>Chloroflexia</taxon>
        <taxon>Chloroflexales</taxon>
        <taxon>Chloroflexineae</taxon>
        <taxon>Chloroflexaceae</taxon>
        <taxon>Chloroflexus</taxon>
    </lineage>
</organism>
<sequence length="306" mass="34200">MAELIPLNEVGVAQPASGAVNRPRRPEWLKARAPGGVNYHDVLRLMREKNLHTVCEEARCPNIGECWNHRTATFLLLGDICTRGCRYCAIGKGKPKPIDENEPERVAESVAHLKLKFAVLTSVNRDDVPDGGAHIFARTIELIRQKVPDCKVEVLIPDFDGNWDALATVLAAEPDVLNHNIETVPRLFRRFRPRAKFEQSIELLARARAARPKLVTKSGMMVGAGETNEEVYEVIDRLRSVDVNVLTIGQYLAPDASYWPVHRYVTPAEFAEFRSYALARGFTHVESGPLVRSSYNAHLHVGAAQH</sequence>
<gene>
    <name evidence="1" type="primary">lipA</name>
    <name type="ordered locus">Caur_2839</name>
</gene>
<feature type="chain" id="PRO_1000077952" description="Lipoyl synthase">
    <location>
        <begin position="1"/>
        <end position="306"/>
    </location>
</feature>
<feature type="domain" description="Radical SAM core" evidence="2">
    <location>
        <begin position="67"/>
        <end position="283"/>
    </location>
</feature>
<feature type="binding site" evidence="1">
    <location>
        <position position="55"/>
    </location>
    <ligand>
        <name>[4Fe-4S] cluster</name>
        <dbReference type="ChEBI" id="CHEBI:49883"/>
        <label>1</label>
    </ligand>
</feature>
<feature type="binding site" evidence="1">
    <location>
        <position position="60"/>
    </location>
    <ligand>
        <name>[4Fe-4S] cluster</name>
        <dbReference type="ChEBI" id="CHEBI:49883"/>
        <label>1</label>
    </ligand>
</feature>
<feature type="binding site" evidence="1">
    <location>
        <position position="66"/>
    </location>
    <ligand>
        <name>[4Fe-4S] cluster</name>
        <dbReference type="ChEBI" id="CHEBI:49883"/>
        <label>1</label>
    </ligand>
</feature>
<feature type="binding site" evidence="1">
    <location>
        <position position="81"/>
    </location>
    <ligand>
        <name>[4Fe-4S] cluster</name>
        <dbReference type="ChEBI" id="CHEBI:49883"/>
        <label>2</label>
        <note>4Fe-4S-S-AdoMet</note>
    </ligand>
</feature>
<feature type="binding site" evidence="1">
    <location>
        <position position="85"/>
    </location>
    <ligand>
        <name>[4Fe-4S] cluster</name>
        <dbReference type="ChEBI" id="CHEBI:49883"/>
        <label>2</label>
        <note>4Fe-4S-S-AdoMet</note>
    </ligand>
</feature>
<feature type="binding site" evidence="1">
    <location>
        <position position="88"/>
    </location>
    <ligand>
        <name>[4Fe-4S] cluster</name>
        <dbReference type="ChEBI" id="CHEBI:49883"/>
        <label>2</label>
        <note>4Fe-4S-S-AdoMet</note>
    </ligand>
</feature>
<feature type="binding site" evidence="1">
    <location>
        <position position="294"/>
    </location>
    <ligand>
        <name>[4Fe-4S] cluster</name>
        <dbReference type="ChEBI" id="CHEBI:49883"/>
        <label>1</label>
    </ligand>
</feature>
<accession>A9WEM1</accession>
<dbReference type="EC" id="2.8.1.8" evidence="1"/>
<dbReference type="EMBL" id="CP000909">
    <property type="protein sequence ID" value="ABY36040.1"/>
    <property type="molecule type" value="Genomic_DNA"/>
</dbReference>
<dbReference type="RefSeq" id="WP_012258693.1">
    <property type="nucleotide sequence ID" value="NC_010175.1"/>
</dbReference>
<dbReference type="RefSeq" id="YP_001636429.1">
    <property type="nucleotide sequence ID" value="NC_010175.1"/>
</dbReference>
<dbReference type="SMR" id="A9WEM1"/>
<dbReference type="FunCoup" id="A9WEM1">
    <property type="interactions" value="497"/>
</dbReference>
<dbReference type="STRING" id="324602.Caur_2839"/>
<dbReference type="EnsemblBacteria" id="ABY36040">
    <property type="protein sequence ID" value="ABY36040"/>
    <property type="gene ID" value="Caur_2839"/>
</dbReference>
<dbReference type="KEGG" id="cau:Caur_2839"/>
<dbReference type="PATRIC" id="fig|324602.8.peg.3196"/>
<dbReference type="eggNOG" id="COG0320">
    <property type="taxonomic scope" value="Bacteria"/>
</dbReference>
<dbReference type="HOGENOM" id="CLU_033144_2_1_0"/>
<dbReference type="InParanoid" id="A9WEM1"/>
<dbReference type="UniPathway" id="UPA00538">
    <property type="reaction ID" value="UER00593"/>
</dbReference>
<dbReference type="Proteomes" id="UP000002008">
    <property type="component" value="Chromosome"/>
</dbReference>
<dbReference type="GO" id="GO:0005737">
    <property type="term" value="C:cytoplasm"/>
    <property type="evidence" value="ECO:0007669"/>
    <property type="project" value="UniProtKB-SubCell"/>
</dbReference>
<dbReference type="GO" id="GO:0051539">
    <property type="term" value="F:4 iron, 4 sulfur cluster binding"/>
    <property type="evidence" value="ECO:0007669"/>
    <property type="project" value="UniProtKB-UniRule"/>
</dbReference>
<dbReference type="GO" id="GO:0016992">
    <property type="term" value="F:lipoate synthase activity"/>
    <property type="evidence" value="ECO:0007669"/>
    <property type="project" value="UniProtKB-UniRule"/>
</dbReference>
<dbReference type="GO" id="GO:0046872">
    <property type="term" value="F:metal ion binding"/>
    <property type="evidence" value="ECO:0007669"/>
    <property type="project" value="UniProtKB-KW"/>
</dbReference>
<dbReference type="FunFam" id="3.20.20.70:FF:000040">
    <property type="entry name" value="Lipoyl synthase"/>
    <property type="match status" value="1"/>
</dbReference>
<dbReference type="Gene3D" id="3.20.20.70">
    <property type="entry name" value="Aldolase class I"/>
    <property type="match status" value="1"/>
</dbReference>
<dbReference type="HAMAP" id="MF_00206">
    <property type="entry name" value="Lipoyl_synth"/>
    <property type="match status" value="1"/>
</dbReference>
<dbReference type="InterPro" id="IPR013785">
    <property type="entry name" value="Aldolase_TIM"/>
</dbReference>
<dbReference type="InterPro" id="IPR006638">
    <property type="entry name" value="Elp3/MiaA/NifB-like_rSAM"/>
</dbReference>
<dbReference type="InterPro" id="IPR031691">
    <property type="entry name" value="LIAS_N"/>
</dbReference>
<dbReference type="InterPro" id="IPR003698">
    <property type="entry name" value="Lipoyl_synth"/>
</dbReference>
<dbReference type="InterPro" id="IPR007197">
    <property type="entry name" value="rSAM"/>
</dbReference>
<dbReference type="NCBIfam" id="TIGR00510">
    <property type="entry name" value="lipA"/>
    <property type="match status" value="1"/>
</dbReference>
<dbReference type="NCBIfam" id="NF004019">
    <property type="entry name" value="PRK05481.1"/>
    <property type="match status" value="1"/>
</dbReference>
<dbReference type="NCBIfam" id="NF009544">
    <property type="entry name" value="PRK12928.1"/>
    <property type="match status" value="1"/>
</dbReference>
<dbReference type="PANTHER" id="PTHR10949">
    <property type="entry name" value="LIPOYL SYNTHASE"/>
    <property type="match status" value="1"/>
</dbReference>
<dbReference type="PANTHER" id="PTHR10949:SF0">
    <property type="entry name" value="LIPOYL SYNTHASE, MITOCHONDRIAL"/>
    <property type="match status" value="1"/>
</dbReference>
<dbReference type="Pfam" id="PF16881">
    <property type="entry name" value="LIAS_N"/>
    <property type="match status" value="1"/>
</dbReference>
<dbReference type="Pfam" id="PF04055">
    <property type="entry name" value="Radical_SAM"/>
    <property type="match status" value="1"/>
</dbReference>
<dbReference type="PIRSF" id="PIRSF005963">
    <property type="entry name" value="Lipoyl_synth"/>
    <property type="match status" value="1"/>
</dbReference>
<dbReference type="SFLD" id="SFLDF00271">
    <property type="entry name" value="lipoyl_synthase"/>
    <property type="match status" value="1"/>
</dbReference>
<dbReference type="SFLD" id="SFLDS00029">
    <property type="entry name" value="Radical_SAM"/>
    <property type="match status" value="1"/>
</dbReference>
<dbReference type="SMART" id="SM00729">
    <property type="entry name" value="Elp3"/>
    <property type="match status" value="1"/>
</dbReference>
<dbReference type="SUPFAM" id="SSF102114">
    <property type="entry name" value="Radical SAM enzymes"/>
    <property type="match status" value="1"/>
</dbReference>
<dbReference type="PROSITE" id="PS51918">
    <property type="entry name" value="RADICAL_SAM"/>
    <property type="match status" value="1"/>
</dbReference>
<comment type="function">
    <text evidence="1">Catalyzes the radical-mediated insertion of two sulfur atoms into the C-6 and C-8 positions of the octanoyl moiety bound to the lipoyl domains of lipoate-dependent enzymes, thereby converting the octanoylated domains into lipoylated derivatives.</text>
</comment>
<comment type="catalytic activity">
    <reaction evidence="1">
        <text>[[Fe-S] cluster scaffold protein carrying a second [4Fe-4S](2+) cluster] + N(6)-octanoyl-L-lysyl-[protein] + 2 oxidized [2Fe-2S]-[ferredoxin] + 2 S-adenosyl-L-methionine + 4 H(+) = [[Fe-S] cluster scaffold protein] + N(6)-[(R)-dihydrolipoyl]-L-lysyl-[protein] + 4 Fe(3+) + 2 hydrogen sulfide + 2 5'-deoxyadenosine + 2 L-methionine + 2 reduced [2Fe-2S]-[ferredoxin]</text>
        <dbReference type="Rhea" id="RHEA:16585"/>
        <dbReference type="Rhea" id="RHEA-COMP:9928"/>
        <dbReference type="Rhea" id="RHEA-COMP:10000"/>
        <dbReference type="Rhea" id="RHEA-COMP:10001"/>
        <dbReference type="Rhea" id="RHEA-COMP:10475"/>
        <dbReference type="Rhea" id="RHEA-COMP:14568"/>
        <dbReference type="Rhea" id="RHEA-COMP:14569"/>
        <dbReference type="ChEBI" id="CHEBI:15378"/>
        <dbReference type="ChEBI" id="CHEBI:17319"/>
        <dbReference type="ChEBI" id="CHEBI:29034"/>
        <dbReference type="ChEBI" id="CHEBI:29919"/>
        <dbReference type="ChEBI" id="CHEBI:33722"/>
        <dbReference type="ChEBI" id="CHEBI:33737"/>
        <dbReference type="ChEBI" id="CHEBI:33738"/>
        <dbReference type="ChEBI" id="CHEBI:57844"/>
        <dbReference type="ChEBI" id="CHEBI:59789"/>
        <dbReference type="ChEBI" id="CHEBI:78809"/>
        <dbReference type="ChEBI" id="CHEBI:83100"/>
        <dbReference type="EC" id="2.8.1.8"/>
    </reaction>
</comment>
<comment type="cofactor">
    <cofactor evidence="1">
        <name>[4Fe-4S] cluster</name>
        <dbReference type="ChEBI" id="CHEBI:49883"/>
    </cofactor>
    <text evidence="1">Binds 2 [4Fe-4S] clusters per subunit. One cluster is coordinated with 3 cysteines and an exchangeable S-adenosyl-L-methionine.</text>
</comment>
<comment type="pathway">
    <text evidence="1">Protein modification; protein lipoylation via endogenous pathway; protein N(6)-(lipoyl)lysine from octanoyl-[acyl-carrier-protein]: step 2/2.</text>
</comment>
<comment type="subcellular location">
    <subcellularLocation>
        <location evidence="1">Cytoplasm</location>
    </subcellularLocation>
</comment>
<comment type="similarity">
    <text evidence="1">Belongs to the radical SAM superfamily. Lipoyl synthase family.</text>
</comment>
<reference key="1">
    <citation type="journal article" date="2011" name="BMC Genomics">
        <title>Complete genome sequence of the filamentous anoxygenic phototrophic bacterium Chloroflexus aurantiacus.</title>
        <authorList>
            <person name="Tang K.H."/>
            <person name="Barry K."/>
            <person name="Chertkov O."/>
            <person name="Dalin E."/>
            <person name="Han C.S."/>
            <person name="Hauser L.J."/>
            <person name="Honchak B.M."/>
            <person name="Karbach L.E."/>
            <person name="Land M.L."/>
            <person name="Lapidus A."/>
            <person name="Larimer F.W."/>
            <person name="Mikhailova N."/>
            <person name="Pitluck S."/>
            <person name="Pierson B.K."/>
            <person name="Blankenship R.E."/>
        </authorList>
    </citation>
    <scope>NUCLEOTIDE SEQUENCE [LARGE SCALE GENOMIC DNA]</scope>
    <source>
        <strain>ATCC 29366 / DSM 635 / J-10-fl</strain>
    </source>
</reference>
<protein>
    <recommendedName>
        <fullName evidence="1">Lipoyl synthase</fullName>
        <ecNumber evidence="1">2.8.1.8</ecNumber>
    </recommendedName>
    <alternativeName>
        <fullName evidence="1">Lip-syn</fullName>
        <shortName evidence="1">LS</shortName>
    </alternativeName>
    <alternativeName>
        <fullName evidence="1">Lipoate synthase</fullName>
    </alternativeName>
    <alternativeName>
        <fullName evidence="1">Lipoic acid synthase</fullName>
    </alternativeName>
    <alternativeName>
        <fullName evidence="1">Sulfur insertion protein LipA</fullName>
    </alternativeName>
</protein>
<keyword id="KW-0004">4Fe-4S</keyword>
<keyword id="KW-0963">Cytoplasm</keyword>
<keyword id="KW-0408">Iron</keyword>
<keyword id="KW-0411">Iron-sulfur</keyword>
<keyword id="KW-0479">Metal-binding</keyword>
<keyword id="KW-1185">Reference proteome</keyword>
<keyword id="KW-0949">S-adenosyl-L-methionine</keyword>
<keyword id="KW-0808">Transferase</keyword>